<feature type="chain" id="PRO_1000015443" description="Deoxyuridine 5'-triphosphate nucleotidohydrolase">
    <location>
        <begin position="1"/>
        <end position="149"/>
    </location>
</feature>
<feature type="binding site" evidence="1">
    <location>
        <begin position="68"/>
        <end position="70"/>
    </location>
    <ligand>
        <name>substrate</name>
    </ligand>
</feature>
<feature type="binding site" evidence="1">
    <location>
        <position position="81"/>
    </location>
    <ligand>
        <name>substrate</name>
    </ligand>
</feature>
<feature type="binding site" evidence="1">
    <location>
        <begin position="85"/>
        <end position="87"/>
    </location>
    <ligand>
        <name>substrate</name>
    </ligand>
</feature>
<accession>A1K4K1</accession>
<proteinExistence type="inferred from homology"/>
<sequence length="149" mass="15758">MHRIDVKLLDPRLKTHPPAYASAGAAGLDLRACLDAPVLLHPGETTLVPSGLAIHLADPGLAAMVLPRSGLGHKHGIVLGNLVGLIDSDYQGQVFVSVWNRGRDVFTIQPMERIAQLVVVPVLQVGFNVVDDFAASERGEGGFGSTGKH</sequence>
<organism>
    <name type="scientific">Azoarcus sp. (strain BH72)</name>
    <dbReference type="NCBI Taxonomy" id="418699"/>
    <lineage>
        <taxon>Bacteria</taxon>
        <taxon>Pseudomonadati</taxon>
        <taxon>Pseudomonadota</taxon>
        <taxon>Betaproteobacteria</taxon>
        <taxon>Rhodocyclales</taxon>
        <taxon>Zoogloeaceae</taxon>
        <taxon>Azoarcus</taxon>
    </lineage>
</organism>
<keyword id="KW-0378">Hydrolase</keyword>
<keyword id="KW-0460">Magnesium</keyword>
<keyword id="KW-0479">Metal-binding</keyword>
<keyword id="KW-0546">Nucleotide metabolism</keyword>
<keyword id="KW-1185">Reference proteome</keyword>
<gene>
    <name evidence="1" type="primary">dut</name>
    <name type="ordered locus">azo1139</name>
</gene>
<protein>
    <recommendedName>
        <fullName evidence="1">Deoxyuridine 5'-triphosphate nucleotidohydrolase</fullName>
        <shortName evidence="1">dUTPase</shortName>
        <ecNumber evidence="1">3.6.1.23</ecNumber>
    </recommendedName>
    <alternativeName>
        <fullName evidence="1">dUTP pyrophosphatase</fullName>
    </alternativeName>
</protein>
<name>DUT_AZOSB</name>
<comment type="function">
    <text evidence="1">This enzyme is involved in nucleotide metabolism: it produces dUMP, the immediate precursor of thymidine nucleotides and it decreases the intracellular concentration of dUTP so that uracil cannot be incorporated into DNA.</text>
</comment>
<comment type="catalytic activity">
    <reaction evidence="1">
        <text>dUTP + H2O = dUMP + diphosphate + H(+)</text>
        <dbReference type="Rhea" id="RHEA:10248"/>
        <dbReference type="ChEBI" id="CHEBI:15377"/>
        <dbReference type="ChEBI" id="CHEBI:15378"/>
        <dbReference type="ChEBI" id="CHEBI:33019"/>
        <dbReference type="ChEBI" id="CHEBI:61555"/>
        <dbReference type="ChEBI" id="CHEBI:246422"/>
        <dbReference type="EC" id="3.6.1.23"/>
    </reaction>
</comment>
<comment type="cofactor">
    <cofactor evidence="1">
        <name>Mg(2+)</name>
        <dbReference type="ChEBI" id="CHEBI:18420"/>
    </cofactor>
</comment>
<comment type="pathway">
    <text evidence="1">Pyrimidine metabolism; dUMP biosynthesis; dUMP from dCTP (dUTP route): step 2/2.</text>
</comment>
<comment type="similarity">
    <text evidence="1">Belongs to the dUTPase family.</text>
</comment>
<reference key="1">
    <citation type="journal article" date="2006" name="Nat. Biotechnol.">
        <title>Complete genome of the mutualistic, N2-fixing grass endophyte Azoarcus sp. strain BH72.</title>
        <authorList>
            <person name="Krause A."/>
            <person name="Ramakumar A."/>
            <person name="Bartels D."/>
            <person name="Battistoni F."/>
            <person name="Bekel T."/>
            <person name="Boch J."/>
            <person name="Boehm M."/>
            <person name="Friedrich F."/>
            <person name="Hurek T."/>
            <person name="Krause L."/>
            <person name="Linke B."/>
            <person name="McHardy A.C."/>
            <person name="Sarkar A."/>
            <person name="Schneiker S."/>
            <person name="Syed A.A."/>
            <person name="Thauer R."/>
            <person name="Vorhoelter F.-J."/>
            <person name="Weidner S."/>
            <person name="Puehler A."/>
            <person name="Reinhold-Hurek B."/>
            <person name="Kaiser O."/>
            <person name="Goesmann A."/>
        </authorList>
    </citation>
    <scope>NUCLEOTIDE SEQUENCE [LARGE SCALE GENOMIC DNA]</scope>
    <source>
        <strain>BH72</strain>
    </source>
</reference>
<evidence type="ECO:0000255" key="1">
    <source>
        <dbReference type="HAMAP-Rule" id="MF_00116"/>
    </source>
</evidence>
<dbReference type="EC" id="3.6.1.23" evidence="1"/>
<dbReference type="EMBL" id="AM406670">
    <property type="protein sequence ID" value="CAL93756.1"/>
    <property type="molecule type" value="Genomic_DNA"/>
</dbReference>
<dbReference type="RefSeq" id="WP_011764872.1">
    <property type="nucleotide sequence ID" value="NC_008702.1"/>
</dbReference>
<dbReference type="SMR" id="A1K4K1"/>
<dbReference type="STRING" id="62928.azo1139"/>
<dbReference type="KEGG" id="aoa:dqs_1250"/>
<dbReference type="KEGG" id="azo:azo1139"/>
<dbReference type="eggNOG" id="COG0756">
    <property type="taxonomic scope" value="Bacteria"/>
</dbReference>
<dbReference type="HOGENOM" id="CLU_068508_1_1_4"/>
<dbReference type="OrthoDB" id="9809956at2"/>
<dbReference type="UniPathway" id="UPA00610">
    <property type="reaction ID" value="UER00666"/>
</dbReference>
<dbReference type="Proteomes" id="UP000002588">
    <property type="component" value="Chromosome"/>
</dbReference>
<dbReference type="GO" id="GO:0004170">
    <property type="term" value="F:dUTP diphosphatase activity"/>
    <property type="evidence" value="ECO:0007669"/>
    <property type="project" value="UniProtKB-UniRule"/>
</dbReference>
<dbReference type="GO" id="GO:0000287">
    <property type="term" value="F:magnesium ion binding"/>
    <property type="evidence" value="ECO:0007669"/>
    <property type="project" value="UniProtKB-UniRule"/>
</dbReference>
<dbReference type="GO" id="GO:0006226">
    <property type="term" value="P:dUMP biosynthetic process"/>
    <property type="evidence" value="ECO:0007669"/>
    <property type="project" value="UniProtKB-UniRule"/>
</dbReference>
<dbReference type="GO" id="GO:0046081">
    <property type="term" value="P:dUTP catabolic process"/>
    <property type="evidence" value="ECO:0007669"/>
    <property type="project" value="InterPro"/>
</dbReference>
<dbReference type="CDD" id="cd07557">
    <property type="entry name" value="trimeric_dUTPase"/>
    <property type="match status" value="1"/>
</dbReference>
<dbReference type="FunFam" id="2.70.40.10:FF:000002">
    <property type="entry name" value="dUTP diphosphatase"/>
    <property type="match status" value="1"/>
</dbReference>
<dbReference type="Gene3D" id="2.70.40.10">
    <property type="match status" value="1"/>
</dbReference>
<dbReference type="HAMAP" id="MF_00116">
    <property type="entry name" value="dUTPase_bact"/>
    <property type="match status" value="1"/>
</dbReference>
<dbReference type="InterPro" id="IPR008181">
    <property type="entry name" value="dUTPase"/>
</dbReference>
<dbReference type="InterPro" id="IPR029054">
    <property type="entry name" value="dUTPase-like"/>
</dbReference>
<dbReference type="InterPro" id="IPR036157">
    <property type="entry name" value="dUTPase-like_sf"/>
</dbReference>
<dbReference type="InterPro" id="IPR033704">
    <property type="entry name" value="dUTPase_trimeric"/>
</dbReference>
<dbReference type="NCBIfam" id="TIGR00576">
    <property type="entry name" value="dut"/>
    <property type="match status" value="1"/>
</dbReference>
<dbReference type="NCBIfam" id="NF001862">
    <property type="entry name" value="PRK00601.1"/>
    <property type="match status" value="1"/>
</dbReference>
<dbReference type="PANTHER" id="PTHR11241">
    <property type="entry name" value="DEOXYURIDINE 5'-TRIPHOSPHATE NUCLEOTIDOHYDROLASE"/>
    <property type="match status" value="1"/>
</dbReference>
<dbReference type="PANTHER" id="PTHR11241:SF0">
    <property type="entry name" value="DEOXYURIDINE 5'-TRIPHOSPHATE NUCLEOTIDOHYDROLASE"/>
    <property type="match status" value="1"/>
</dbReference>
<dbReference type="Pfam" id="PF00692">
    <property type="entry name" value="dUTPase"/>
    <property type="match status" value="1"/>
</dbReference>
<dbReference type="SUPFAM" id="SSF51283">
    <property type="entry name" value="dUTPase-like"/>
    <property type="match status" value="1"/>
</dbReference>